<sequence length="248" mass="24231">MIGSLAGAFAFGTVLPVPAGSTATLGRGVMTALPGVGIVLGAVAAAVLWAGSWAFGPHSALAGLLAVAVLLLATRGMHIDGLSDTVDGLGCYGAPERALRVMRDGSAGAFGAASIVVAVGAQTLAFSMLPGGWSGAVGVVVAVTAGRVAALVACRRGIPAAEGSALGGRVAGTQPAAVVLVWLAAVAALAIPATERIWQGPLTVVVAVGMTALLVRHCVRRFGGITGDVLGAAIEVTTTVVAVGLVIR</sequence>
<accession>A1UIA4</accession>
<keyword id="KW-1003">Cell membrane</keyword>
<keyword id="KW-0169">Cobalamin biosynthesis</keyword>
<keyword id="KW-0460">Magnesium</keyword>
<keyword id="KW-0472">Membrane</keyword>
<keyword id="KW-0808">Transferase</keyword>
<keyword id="KW-0812">Transmembrane</keyword>
<keyword id="KW-1133">Transmembrane helix</keyword>
<name>COBS_MYCSK</name>
<organism>
    <name type="scientific">Mycobacterium sp. (strain KMS)</name>
    <dbReference type="NCBI Taxonomy" id="189918"/>
    <lineage>
        <taxon>Bacteria</taxon>
        <taxon>Bacillati</taxon>
        <taxon>Actinomycetota</taxon>
        <taxon>Actinomycetes</taxon>
        <taxon>Mycobacteriales</taxon>
        <taxon>Mycobacteriaceae</taxon>
        <taxon>Mycobacterium</taxon>
    </lineage>
</organism>
<evidence type="ECO:0000255" key="1">
    <source>
        <dbReference type="HAMAP-Rule" id="MF_00719"/>
    </source>
</evidence>
<protein>
    <recommendedName>
        <fullName evidence="1">Adenosylcobinamide-GDP ribazoletransferase</fullName>
        <ecNumber evidence="1">2.7.8.26</ecNumber>
    </recommendedName>
    <alternativeName>
        <fullName evidence="1">Cobalamin synthase</fullName>
    </alternativeName>
    <alternativeName>
        <fullName evidence="1">Cobalamin-5'-phosphate synthase</fullName>
    </alternativeName>
</protein>
<comment type="function">
    <text evidence="1">Joins adenosylcobinamide-GDP and alpha-ribazole to generate adenosylcobalamin (Ado-cobalamin). Also synthesizes adenosylcobalamin 5'-phosphate from adenosylcobinamide-GDP and alpha-ribazole 5'-phosphate.</text>
</comment>
<comment type="catalytic activity">
    <reaction evidence="1">
        <text>alpha-ribazole + adenosylcob(III)inamide-GDP = adenosylcob(III)alamin + GMP + H(+)</text>
        <dbReference type="Rhea" id="RHEA:16049"/>
        <dbReference type="ChEBI" id="CHEBI:10329"/>
        <dbReference type="ChEBI" id="CHEBI:15378"/>
        <dbReference type="ChEBI" id="CHEBI:18408"/>
        <dbReference type="ChEBI" id="CHEBI:58115"/>
        <dbReference type="ChEBI" id="CHEBI:60487"/>
        <dbReference type="EC" id="2.7.8.26"/>
    </reaction>
</comment>
<comment type="catalytic activity">
    <reaction evidence="1">
        <text>alpha-ribazole 5'-phosphate + adenosylcob(III)inamide-GDP = adenosylcob(III)alamin 5'-phosphate + GMP + H(+)</text>
        <dbReference type="Rhea" id="RHEA:23560"/>
        <dbReference type="ChEBI" id="CHEBI:15378"/>
        <dbReference type="ChEBI" id="CHEBI:57918"/>
        <dbReference type="ChEBI" id="CHEBI:58115"/>
        <dbReference type="ChEBI" id="CHEBI:60487"/>
        <dbReference type="ChEBI" id="CHEBI:60493"/>
        <dbReference type="EC" id="2.7.8.26"/>
    </reaction>
</comment>
<comment type="cofactor">
    <cofactor evidence="1">
        <name>Mg(2+)</name>
        <dbReference type="ChEBI" id="CHEBI:18420"/>
    </cofactor>
</comment>
<comment type="pathway">
    <text evidence="1">Cofactor biosynthesis; adenosylcobalamin biosynthesis; adenosylcobalamin from cob(II)yrinate a,c-diamide: step 7/7.</text>
</comment>
<comment type="subcellular location">
    <subcellularLocation>
        <location evidence="1">Cell membrane</location>
        <topology evidence="1">Multi-pass membrane protein</topology>
    </subcellularLocation>
</comment>
<comment type="similarity">
    <text evidence="1">Belongs to the CobS family.</text>
</comment>
<feature type="chain" id="PRO_1000045781" description="Adenosylcobinamide-GDP ribazoletransferase">
    <location>
        <begin position="1"/>
        <end position="248"/>
    </location>
</feature>
<feature type="transmembrane region" description="Helical" evidence="1">
    <location>
        <begin position="1"/>
        <end position="21"/>
    </location>
</feature>
<feature type="transmembrane region" description="Helical" evidence="1">
    <location>
        <begin position="35"/>
        <end position="55"/>
    </location>
</feature>
<feature type="transmembrane region" description="Helical" evidence="1">
    <location>
        <begin position="59"/>
        <end position="79"/>
    </location>
</feature>
<feature type="transmembrane region" description="Helical" evidence="1">
    <location>
        <begin position="101"/>
        <end position="121"/>
    </location>
</feature>
<feature type="transmembrane region" description="Helical" evidence="1">
    <location>
        <begin position="123"/>
        <end position="143"/>
    </location>
</feature>
<feature type="transmembrane region" description="Helical" evidence="1">
    <location>
        <begin position="171"/>
        <end position="191"/>
    </location>
</feature>
<feature type="transmembrane region" description="Helical" evidence="1">
    <location>
        <begin position="197"/>
        <end position="217"/>
    </location>
</feature>
<feature type="transmembrane region" description="Helical" evidence="1">
    <location>
        <begin position="227"/>
        <end position="247"/>
    </location>
</feature>
<reference key="1">
    <citation type="submission" date="2006-12" db="EMBL/GenBank/DDBJ databases">
        <title>Complete sequence of chromosome of Mycobacterium sp. KMS.</title>
        <authorList>
            <consortium name="US DOE Joint Genome Institute"/>
            <person name="Copeland A."/>
            <person name="Lucas S."/>
            <person name="Lapidus A."/>
            <person name="Barry K."/>
            <person name="Detter J.C."/>
            <person name="Glavina del Rio T."/>
            <person name="Hammon N."/>
            <person name="Israni S."/>
            <person name="Dalin E."/>
            <person name="Tice H."/>
            <person name="Pitluck S."/>
            <person name="Kiss H."/>
            <person name="Brettin T."/>
            <person name="Bruce D."/>
            <person name="Han C."/>
            <person name="Tapia R."/>
            <person name="Gilna P."/>
            <person name="Schmutz J."/>
            <person name="Larimer F."/>
            <person name="Land M."/>
            <person name="Hauser L."/>
            <person name="Kyrpides N."/>
            <person name="Mikhailova N."/>
            <person name="Miller C.D."/>
            <person name="Richardson P."/>
        </authorList>
    </citation>
    <scope>NUCLEOTIDE SEQUENCE [LARGE SCALE GENOMIC DNA]</scope>
    <source>
        <strain>KMS</strain>
    </source>
</reference>
<dbReference type="EC" id="2.7.8.26" evidence="1"/>
<dbReference type="EMBL" id="CP000518">
    <property type="protein sequence ID" value="ABL92562.1"/>
    <property type="molecule type" value="Genomic_DNA"/>
</dbReference>
<dbReference type="STRING" id="189918.Mkms_3368"/>
<dbReference type="KEGG" id="mkm:Mkms_3368"/>
<dbReference type="HOGENOM" id="CLU_057426_0_2_11"/>
<dbReference type="OrthoDB" id="9794223at2"/>
<dbReference type="UniPathway" id="UPA00148">
    <property type="reaction ID" value="UER00238"/>
</dbReference>
<dbReference type="GO" id="GO:0005886">
    <property type="term" value="C:plasma membrane"/>
    <property type="evidence" value="ECO:0007669"/>
    <property type="project" value="UniProtKB-SubCell"/>
</dbReference>
<dbReference type="GO" id="GO:0051073">
    <property type="term" value="F:adenosylcobinamide-GDP ribazoletransferase activity"/>
    <property type="evidence" value="ECO:0007669"/>
    <property type="project" value="UniProtKB-UniRule"/>
</dbReference>
<dbReference type="GO" id="GO:0008818">
    <property type="term" value="F:cobalamin 5'-phosphate synthase activity"/>
    <property type="evidence" value="ECO:0007669"/>
    <property type="project" value="UniProtKB-UniRule"/>
</dbReference>
<dbReference type="GO" id="GO:0009236">
    <property type="term" value="P:cobalamin biosynthetic process"/>
    <property type="evidence" value="ECO:0007669"/>
    <property type="project" value="UniProtKB-UniRule"/>
</dbReference>
<dbReference type="HAMAP" id="MF_00719">
    <property type="entry name" value="CobS"/>
    <property type="match status" value="1"/>
</dbReference>
<dbReference type="InterPro" id="IPR003805">
    <property type="entry name" value="CobS"/>
</dbReference>
<dbReference type="NCBIfam" id="NF001279">
    <property type="entry name" value="PRK00235.2-1"/>
    <property type="match status" value="1"/>
</dbReference>
<dbReference type="PANTHER" id="PTHR34148">
    <property type="entry name" value="ADENOSYLCOBINAMIDE-GDP RIBAZOLETRANSFERASE"/>
    <property type="match status" value="1"/>
</dbReference>
<dbReference type="PANTHER" id="PTHR34148:SF1">
    <property type="entry name" value="ADENOSYLCOBINAMIDE-GDP RIBAZOLETRANSFERASE"/>
    <property type="match status" value="1"/>
</dbReference>
<dbReference type="Pfam" id="PF02654">
    <property type="entry name" value="CobS"/>
    <property type="match status" value="1"/>
</dbReference>
<gene>
    <name evidence="1" type="primary">cobS</name>
    <name type="ordered locus">Mkms_3368</name>
</gene>
<proteinExistence type="inferred from homology"/>